<accession>Q7P1Y3</accession>
<proteinExistence type="inferred from homology"/>
<keyword id="KW-0521">NADP</keyword>
<keyword id="KW-0560">Oxidoreductase</keyword>
<keyword id="KW-0627">Porphyrin biosynthesis</keyword>
<keyword id="KW-1185">Reference proteome</keyword>
<dbReference type="EC" id="1.2.1.70" evidence="1"/>
<dbReference type="EMBL" id="AE016825">
    <property type="protein sequence ID" value="AAQ57758.1"/>
    <property type="molecule type" value="Genomic_DNA"/>
</dbReference>
<dbReference type="RefSeq" id="WP_011133634.1">
    <property type="nucleotide sequence ID" value="NC_005085.1"/>
</dbReference>
<dbReference type="SMR" id="Q7P1Y3"/>
<dbReference type="STRING" id="243365.CV_0079"/>
<dbReference type="GeneID" id="66366027"/>
<dbReference type="KEGG" id="cvi:CV_0079"/>
<dbReference type="eggNOG" id="COG0373">
    <property type="taxonomic scope" value="Bacteria"/>
</dbReference>
<dbReference type="HOGENOM" id="CLU_035113_2_2_4"/>
<dbReference type="OrthoDB" id="110209at2"/>
<dbReference type="UniPathway" id="UPA00251">
    <property type="reaction ID" value="UER00316"/>
</dbReference>
<dbReference type="Proteomes" id="UP000001424">
    <property type="component" value="Chromosome"/>
</dbReference>
<dbReference type="GO" id="GO:0008883">
    <property type="term" value="F:glutamyl-tRNA reductase activity"/>
    <property type="evidence" value="ECO:0007669"/>
    <property type="project" value="UniProtKB-UniRule"/>
</dbReference>
<dbReference type="GO" id="GO:0050661">
    <property type="term" value="F:NADP binding"/>
    <property type="evidence" value="ECO:0007669"/>
    <property type="project" value="InterPro"/>
</dbReference>
<dbReference type="GO" id="GO:0019353">
    <property type="term" value="P:protoporphyrinogen IX biosynthetic process from glutamate"/>
    <property type="evidence" value="ECO:0007669"/>
    <property type="project" value="TreeGrafter"/>
</dbReference>
<dbReference type="CDD" id="cd05213">
    <property type="entry name" value="NAD_bind_Glutamyl_tRNA_reduct"/>
    <property type="match status" value="1"/>
</dbReference>
<dbReference type="FunFam" id="3.30.460.30:FF:000001">
    <property type="entry name" value="Glutamyl-tRNA reductase"/>
    <property type="match status" value="1"/>
</dbReference>
<dbReference type="FunFam" id="3.40.50.720:FF:000031">
    <property type="entry name" value="Glutamyl-tRNA reductase"/>
    <property type="match status" value="1"/>
</dbReference>
<dbReference type="Gene3D" id="3.30.460.30">
    <property type="entry name" value="Glutamyl-tRNA reductase, N-terminal domain"/>
    <property type="match status" value="1"/>
</dbReference>
<dbReference type="Gene3D" id="3.40.50.720">
    <property type="entry name" value="NAD(P)-binding Rossmann-like Domain"/>
    <property type="match status" value="1"/>
</dbReference>
<dbReference type="HAMAP" id="MF_00087">
    <property type="entry name" value="Glu_tRNA_reductase"/>
    <property type="match status" value="1"/>
</dbReference>
<dbReference type="InterPro" id="IPR000343">
    <property type="entry name" value="4pyrrol_synth_GluRdtase"/>
</dbReference>
<dbReference type="InterPro" id="IPR015896">
    <property type="entry name" value="4pyrrol_synth_GluRdtase_dimer"/>
</dbReference>
<dbReference type="InterPro" id="IPR015895">
    <property type="entry name" value="4pyrrol_synth_GluRdtase_N"/>
</dbReference>
<dbReference type="InterPro" id="IPR018214">
    <property type="entry name" value="GluRdtase_CS"/>
</dbReference>
<dbReference type="InterPro" id="IPR036453">
    <property type="entry name" value="GluRdtase_dimer_dom_sf"/>
</dbReference>
<dbReference type="InterPro" id="IPR036343">
    <property type="entry name" value="GluRdtase_N_sf"/>
</dbReference>
<dbReference type="InterPro" id="IPR036291">
    <property type="entry name" value="NAD(P)-bd_dom_sf"/>
</dbReference>
<dbReference type="InterPro" id="IPR006151">
    <property type="entry name" value="Shikm_DH/Glu-tRNA_Rdtase"/>
</dbReference>
<dbReference type="NCBIfam" id="TIGR01035">
    <property type="entry name" value="hemA"/>
    <property type="match status" value="1"/>
</dbReference>
<dbReference type="PANTHER" id="PTHR43013">
    <property type="entry name" value="GLUTAMYL-TRNA REDUCTASE"/>
    <property type="match status" value="1"/>
</dbReference>
<dbReference type="PANTHER" id="PTHR43013:SF1">
    <property type="entry name" value="GLUTAMYL-TRNA REDUCTASE"/>
    <property type="match status" value="1"/>
</dbReference>
<dbReference type="Pfam" id="PF00745">
    <property type="entry name" value="GlutR_dimer"/>
    <property type="match status" value="1"/>
</dbReference>
<dbReference type="Pfam" id="PF05201">
    <property type="entry name" value="GlutR_N"/>
    <property type="match status" value="1"/>
</dbReference>
<dbReference type="Pfam" id="PF01488">
    <property type="entry name" value="Shikimate_DH"/>
    <property type="match status" value="1"/>
</dbReference>
<dbReference type="PIRSF" id="PIRSF000445">
    <property type="entry name" value="4pyrrol_synth_GluRdtase"/>
    <property type="match status" value="1"/>
</dbReference>
<dbReference type="SUPFAM" id="SSF69742">
    <property type="entry name" value="Glutamyl tRNA-reductase catalytic, N-terminal domain"/>
    <property type="match status" value="1"/>
</dbReference>
<dbReference type="SUPFAM" id="SSF69075">
    <property type="entry name" value="Glutamyl tRNA-reductase dimerization domain"/>
    <property type="match status" value="1"/>
</dbReference>
<dbReference type="SUPFAM" id="SSF51735">
    <property type="entry name" value="NAD(P)-binding Rossmann-fold domains"/>
    <property type="match status" value="1"/>
</dbReference>
<dbReference type="PROSITE" id="PS00747">
    <property type="entry name" value="GLUTR"/>
    <property type="match status" value="1"/>
</dbReference>
<protein>
    <recommendedName>
        <fullName evidence="1">Glutamyl-tRNA reductase</fullName>
        <shortName evidence="1">GluTR</shortName>
        <ecNumber evidence="1">1.2.1.70</ecNumber>
    </recommendedName>
</protein>
<organism>
    <name type="scientific">Chromobacterium violaceum (strain ATCC 12472 / DSM 30191 / JCM 1249 / CCUG 213 / NBRC 12614 / NCIMB 9131 / NCTC 9757 / MK)</name>
    <dbReference type="NCBI Taxonomy" id="243365"/>
    <lineage>
        <taxon>Bacteria</taxon>
        <taxon>Pseudomonadati</taxon>
        <taxon>Pseudomonadota</taxon>
        <taxon>Betaproteobacteria</taxon>
        <taxon>Neisseriales</taxon>
        <taxon>Chromobacteriaceae</taxon>
        <taxon>Chromobacterium</taxon>
    </lineage>
</organism>
<name>HEM1_CHRVO</name>
<evidence type="ECO:0000255" key="1">
    <source>
        <dbReference type="HAMAP-Rule" id="MF_00087"/>
    </source>
</evidence>
<comment type="function">
    <text evidence="1">Catalyzes the NADPH-dependent reduction of glutamyl-tRNA(Glu) to glutamate 1-semialdehyde (GSA).</text>
</comment>
<comment type="catalytic activity">
    <reaction evidence="1">
        <text>(S)-4-amino-5-oxopentanoate + tRNA(Glu) + NADP(+) = L-glutamyl-tRNA(Glu) + NADPH + H(+)</text>
        <dbReference type="Rhea" id="RHEA:12344"/>
        <dbReference type="Rhea" id="RHEA-COMP:9663"/>
        <dbReference type="Rhea" id="RHEA-COMP:9680"/>
        <dbReference type="ChEBI" id="CHEBI:15378"/>
        <dbReference type="ChEBI" id="CHEBI:57501"/>
        <dbReference type="ChEBI" id="CHEBI:57783"/>
        <dbReference type="ChEBI" id="CHEBI:58349"/>
        <dbReference type="ChEBI" id="CHEBI:78442"/>
        <dbReference type="ChEBI" id="CHEBI:78520"/>
        <dbReference type="EC" id="1.2.1.70"/>
    </reaction>
</comment>
<comment type="pathway">
    <text evidence="1">Porphyrin-containing compound metabolism; protoporphyrin-IX biosynthesis; 5-aminolevulinate from L-glutamyl-tRNA(Glu): step 1/2.</text>
</comment>
<comment type="subunit">
    <text evidence="1">Homodimer.</text>
</comment>
<comment type="domain">
    <text evidence="1">Possesses an unusual extended V-shaped dimeric structure with each monomer consisting of three distinct domains arranged along a curved 'spinal' alpha-helix. The N-terminal catalytic domain specifically recognizes the glutamate moiety of the substrate. The second domain is the NADPH-binding domain, and the third C-terminal domain is responsible for dimerization.</text>
</comment>
<comment type="miscellaneous">
    <text evidence="1">During catalysis, the active site Cys acts as a nucleophile attacking the alpha-carbonyl group of tRNA-bound glutamate with the formation of a thioester intermediate between enzyme and glutamate, and the concomitant release of tRNA(Glu). The thioester intermediate is finally reduced by direct hydride transfer from NADPH, to form the product GSA.</text>
</comment>
<comment type="similarity">
    <text evidence="1">Belongs to the glutamyl-tRNA reductase family.</text>
</comment>
<gene>
    <name evidence="1" type="primary">hemA</name>
    <name type="ordered locus">CV_0079</name>
</gene>
<reference key="1">
    <citation type="journal article" date="2003" name="Proc. Natl. Acad. Sci. U.S.A.">
        <title>The complete genome sequence of Chromobacterium violaceum reveals remarkable and exploitable bacterial adaptability.</title>
        <authorList>
            <person name="Vasconcelos A.T.R."/>
            <person name="de Almeida D.F."/>
            <person name="Hungria M."/>
            <person name="Guimaraes C.T."/>
            <person name="Antonio R.V."/>
            <person name="Almeida F.C."/>
            <person name="de Almeida L.G.P."/>
            <person name="de Almeida R."/>
            <person name="Alves-Gomes J.A."/>
            <person name="Andrade E.M."/>
            <person name="Araripe J."/>
            <person name="de Araujo M.F.F."/>
            <person name="Astolfi-Filho S."/>
            <person name="Azevedo V."/>
            <person name="Baptista A.J."/>
            <person name="Bataus L.A.M."/>
            <person name="Batista J.S."/>
            <person name="Belo A."/>
            <person name="van den Berg C."/>
            <person name="Bogo M."/>
            <person name="Bonatto S."/>
            <person name="Bordignon J."/>
            <person name="Brigido M.M."/>
            <person name="Brito C.A."/>
            <person name="Brocchi M."/>
            <person name="Burity H.A."/>
            <person name="Camargo A.A."/>
            <person name="Cardoso D.D.P."/>
            <person name="Carneiro N.P."/>
            <person name="Carraro D.M."/>
            <person name="Carvalho C.M.B."/>
            <person name="Cascardo J.C.M."/>
            <person name="Cavada B.S."/>
            <person name="Chueire L.M.O."/>
            <person name="Creczynski-Pasa T.B."/>
            <person name="Cunha-Junior N.C."/>
            <person name="Fagundes N."/>
            <person name="Falcao C.L."/>
            <person name="Fantinatti F."/>
            <person name="Farias I.P."/>
            <person name="Felipe M.S.S."/>
            <person name="Ferrari L.P."/>
            <person name="Ferro J.A."/>
            <person name="Ferro M.I.T."/>
            <person name="Franco G.R."/>
            <person name="Freitas N.S.A."/>
            <person name="Furlan L.R."/>
            <person name="Gazzinelli R.T."/>
            <person name="Gomes E.A."/>
            <person name="Goncalves P.R."/>
            <person name="Grangeiro T.B."/>
            <person name="Grattapaglia D."/>
            <person name="Grisard E.C."/>
            <person name="Hanna E.S."/>
            <person name="Jardim S.N."/>
            <person name="Laurino J."/>
            <person name="Leoi L.C.T."/>
            <person name="Lima L.F.A."/>
            <person name="Loureiro M.F."/>
            <person name="Lyra M.C.C.P."/>
            <person name="Madeira H.M.F."/>
            <person name="Manfio G.P."/>
            <person name="Maranhao A.Q."/>
            <person name="Martins W.S."/>
            <person name="di Mauro S.M.Z."/>
            <person name="de Medeiros S.R.B."/>
            <person name="Meissner R.V."/>
            <person name="Moreira M.A.M."/>
            <person name="Nascimento F.F."/>
            <person name="Nicolas M.F."/>
            <person name="Oliveira J.G."/>
            <person name="Oliveira S.C."/>
            <person name="Paixao R.F.C."/>
            <person name="Parente J.A."/>
            <person name="Pedrosa F.O."/>
            <person name="Pena S.D.J."/>
            <person name="Pereira J.O."/>
            <person name="Pereira M."/>
            <person name="Pinto L.S.R.C."/>
            <person name="Pinto L.S."/>
            <person name="Porto J.I.R."/>
            <person name="Potrich D.P."/>
            <person name="Ramalho-Neto C.E."/>
            <person name="Reis A.M.M."/>
            <person name="Rigo L.U."/>
            <person name="Rondinelli E."/>
            <person name="Santos E.B.P."/>
            <person name="Santos F.R."/>
            <person name="Schneider M.P.C."/>
            <person name="Seuanez H.N."/>
            <person name="Silva A.M.R."/>
            <person name="da Silva A.L.C."/>
            <person name="Silva D.W."/>
            <person name="Silva R."/>
            <person name="Simoes I.C."/>
            <person name="Simon D."/>
            <person name="Soares C.M.A."/>
            <person name="Soares R.B.A."/>
            <person name="Souza E.M."/>
            <person name="Souza K.R.L."/>
            <person name="Souza R.C."/>
            <person name="Steffens M.B.R."/>
            <person name="Steindel M."/>
            <person name="Teixeira S.R."/>
            <person name="Urmenyi T."/>
            <person name="Vettore A."/>
            <person name="Wassem R."/>
            <person name="Zaha A."/>
            <person name="Simpson A.J.G."/>
        </authorList>
    </citation>
    <scope>NUCLEOTIDE SEQUENCE [LARGE SCALE GENOMIC DNA]</scope>
    <source>
        <strain>ATCC 12472 / DSM 30191 / JCM 1249 / CCUG 213 / NBRC 12614 / NCIMB 9131 / NCTC 9757 / MK</strain>
    </source>
</reference>
<sequence length="417" mass="45298">MHLLAFGLNHHTAPLSIREKLAFPAETLPRALESLLASQAAREAAIVSTCNRTEIYCSSPDPHAALDWLCQFHGLSRAELEPYLYRLEASQAARHAFRVASGLDSMVLGETQILGQLKDAVRSAEHAGALGTLLNGLFQRTFAVAKEVRSSTAVGASSVSMSAAAVKLAEQIFPSVAELNVLFVGAGEMIELVATHFAARNPSCITVANRTLERGQRLAEQFGGNAITLAELPESLARYDVVVTSTASQLPIIGKGMVERAIKARRHRPMFMLDLAVPRDVELEVGKLDDVFLYSVDDIAGIVEVGKEARQNAAEEAETIIQARVAEFTDWLKKRETVPLIRALRDEADRARRHALEGALKQLARGDAPEKVLEALSVQLTNKLMHPPTQALSSGSGAEHDAQVQAIARLYRLHPES</sequence>
<feature type="chain" id="PRO_0000114010" description="Glutamyl-tRNA reductase">
    <location>
        <begin position="1"/>
        <end position="417"/>
    </location>
</feature>
<feature type="active site" description="Nucleophile" evidence="1">
    <location>
        <position position="50"/>
    </location>
</feature>
<feature type="binding site" evidence="1">
    <location>
        <begin position="49"/>
        <end position="52"/>
    </location>
    <ligand>
        <name>substrate</name>
    </ligand>
</feature>
<feature type="binding site" evidence="1">
    <location>
        <position position="105"/>
    </location>
    <ligand>
        <name>substrate</name>
    </ligand>
</feature>
<feature type="binding site" evidence="1">
    <location>
        <begin position="110"/>
        <end position="112"/>
    </location>
    <ligand>
        <name>substrate</name>
    </ligand>
</feature>
<feature type="binding site" evidence="1">
    <location>
        <position position="116"/>
    </location>
    <ligand>
        <name>substrate</name>
    </ligand>
</feature>
<feature type="binding site" evidence="1">
    <location>
        <begin position="185"/>
        <end position="190"/>
    </location>
    <ligand>
        <name>NADP(+)</name>
        <dbReference type="ChEBI" id="CHEBI:58349"/>
    </ligand>
</feature>
<feature type="site" description="Important for activity" evidence="1">
    <location>
        <position position="95"/>
    </location>
</feature>